<keyword id="KW-1185">Reference proteome</keyword>
<keyword id="KW-0678">Repressor</keyword>
<keyword id="KW-0687">Ribonucleoprotein</keyword>
<keyword id="KW-0689">Ribosomal protein</keyword>
<keyword id="KW-0694">RNA-binding</keyword>
<keyword id="KW-0699">rRNA-binding</keyword>
<keyword id="KW-0810">Translation regulation</keyword>
<keyword id="KW-0820">tRNA-binding</keyword>
<gene>
    <name evidence="1" type="primary">rplA</name>
    <name type="ordered locus">GDI3413</name>
    <name type="ordered locus">Gdia_2957</name>
</gene>
<protein>
    <recommendedName>
        <fullName evidence="1">Large ribosomal subunit protein uL1</fullName>
    </recommendedName>
    <alternativeName>
        <fullName evidence="2">50S ribosomal protein L1</fullName>
    </alternativeName>
</protein>
<sequence>MAKNKRLTAAQATVDRNKAYGLDEAIALVKQVATAKFDETIEISLNLGIDPRHADQMVRGLLSLPNGTGKTLRVGVFARGAKAEEALAAGADVVGAEDLAEKVQAGEIAFDRCIATPDMMALVGRLGKILGPRGLMPNPKLGTVTMDVKGAVTAAKSGQVEYRAEKAGIIHAGIGKASFEGDKLAENIRAFVDAVQKAKPTGAKGTYLRKAALSSTMGPGIRVDVSAFSAG</sequence>
<accession>A9H3T0</accession>
<accession>B5ZIF4</accession>
<reference key="1">
    <citation type="journal article" date="2009" name="BMC Genomics">
        <title>Complete genome sequence of the sugarcane nitrogen-fixing endophyte Gluconacetobacter diazotrophicus Pal5.</title>
        <authorList>
            <person name="Bertalan M."/>
            <person name="Albano R."/>
            <person name="de Padua V."/>
            <person name="Rouws L."/>
            <person name="Rojas C."/>
            <person name="Hemerly A."/>
            <person name="Teixeira K."/>
            <person name="Schwab S."/>
            <person name="Araujo J."/>
            <person name="Oliveira A."/>
            <person name="Franca L."/>
            <person name="Magalhaes V."/>
            <person name="Alqueres S."/>
            <person name="Cardoso A."/>
            <person name="Almeida W."/>
            <person name="Loureiro M.M."/>
            <person name="Nogueira E."/>
            <person name="Cidade D."/>
            <person name="Oliveira D."/>
            <person name="Simao T."/>
            <person name="Macedo J."/>
            <person name="Valadao A."/>
            <person name="Dreschsel M."/>
            <person name="Freitas F."/>
            <person name="Vidal M."/>
            <person name="Guedes H."/>
            <person name="Rodrigues E."/>
            <person name="Meneses C."/>
            <person name="Brioso P."/>
            <person name="Pozzer L."/>
            <person name="Figueiredo D."/>
            <person name="Montano H."/>
            <person name="Junior J."/>
            <person name="de Souza Filho G."/>
            <person name="Martin Quintana Flores V."/>
            <person name="Ferreira B."/>
            <person name="Branco A."/>
            <person name="Gonzalez P."/>
            <person name="Guillobel H."/>
            <person name="Lemos M."/>
            <person name="Seibel L."/>
            <person name="Macedo J."/>
            <person name="Alves-Ferreira M."/>
            <person name="Sachetto-Martins G."/>
            <person name="Coelho A."/>
            <person name="Santos E."/>
            <person name="Amaral G."/>
            <person name="Neves A."/>
            <person name="Pacheco A.B."/>
            <person name="Carvalho D."/>
            <person name="Lery L."/>
            <person name="Bisch P."/>
            <person name="Rossle S.C."/>
            <person name="Urmenyi T."/>
            <person name="Rael Pereira A."/>
            <person name="Silva R."/>
            <person name="Rondinelli E."/>
            <person name="von Kruger W."/>
            <person name="Martins O."/>
            <person name="Baldani J.I."/>
            <person name="Ferreira P.C."/>
        </authorList>
    </citation>
    <scope>NUCLEOTIDE SEQUENCE [LARGE SCALE GENOMIC DNA]</scope>
    <source>
        <strain>ATCC 49037 / DSM 5601 / CCUG 37298 / CIP 103539 / LMG 7603 / PAl5</strain>
    </source>
</reference>
<reference key="2">
    <citation type="journal article" date="2010" name="Stand. Genomic Sci.">
        <title>Two genome sequences of the same bacterial strain, Gluconacetobacter diazotrophicus PAl 5, suggest a new standard in genome sequence submission.</title>
        <authorList>
            <person name="Giongo A."/>
            <person name="Tyler H.L."/>
            <person name="Zipperer U.N."/>
            <person name="Triplett E.W."/>
        </authorList>
    </citation>
    <scope>NUCLEOTIDE SEQUENCE [LARGE SCALE GENOMIC DNA]</scope>
    <source>
        <strain>ATCC 49037 / DSM 5601 / CCUG 37298 / CIP 103539 / LMG 7603 / PAl5</strain>
    </source>
</reference>
<feature type="chain" id="PRO_1000086288" description="Large ribosomal subunit protein uL1">
    <location>
        <begin position="1"/>
        <end position="231"/>
    </location>
</feature>
<organism>
    <name type="scientific">Gluconacetobacter diazotrophicus (strain ATCC 49037 / DSM 5601 / CCUG 37298 / CIP 103539 / LMG 7603 / PAl5)</name>
    <dbReference type="NCBI Taxonomy" id="272568"/>
    <lineage>
        <taxon>Bacteria</taxon>
        <taxon>Pseudomonadati</taxon>
        <taxon>Pseudomonadota</taxon>
        <taxon>Alphaproteobacteria</taxon>
        <taxon>Acetobacterales</taxon>
        <taxon>Acetobacteraceae</taxon>
        <taxon>Gluconacetobacter</taxon>
    </lineage>
</organism>
<dbReference type="EMBL" id="AM889285">
    <property type="protein sequence ID" value="CAP57356.1"/>
    <property type="molecule type" value="Genomic_DNA"/>
</dbReference>
<dbReference type="EMBL" id="CP001189">
    <property type="protein sequence ID" value="ACI52687.1"/>
    <property type="molecule type" value="Genomic_DNA"/>
</dbReference>
<dbReference type="RefSeq" id="WP_012227981.1">
    <property type="nucleotide sequence ID" value="NC_010125.1"/>
</dbReference>
<dbReference type="SMR" id="A9H3T0"/>
<dbReference type="STRING" id="272568.GDI3413"/>
<dbReference type="KEGG" id="gdi:GDI3413"/>
<dbReference type="KEGG" id="gdj:Gdia_2957"/>
<dbReference type="eggNOG" id="COG0081">
    <property type="taxonomic scope" value="Bacteria"/>
</dbReference>
<dbReference type="HOGENOM" id="CLU_062853_0_0_5"/>
<dbReference type="OrthoDB" id="9803740at2"/>
<dbReference type="Proteomes" id="UP000001176">
    <property type="component" value="Chromosome"/>
</dbReference>
<dbReference type="GO" id="GO:0022625">
    <property type="term" value="C:cytosolic large ribosomal subunit"/>
    <property type="evidence" value="ECO:0007669"/>
    <property type="project" value="TreeGrafter"/>
</dbReference>
<dbReference type="GO" id="GO:0019843">
    <property type="term" value="F:rRNA binding"/>
    <property type="evidence" value="ECO:0007669"/>
    <property type="project" value="UniProtKB-UniRule"/>
</dbReference>
<dbReference type="GO" id="GO:0003735">
    <property type="term" value="F:structural constituent of ribosome"/>
    <property type="evidence" value="ECO:0007669"/>
    <property type="project" value="InterPro"/>
</dbReference>
<dbReference type="GO" id="GO:0000049">
    <property type="term" value="F:tRNA binding"/>
    <property type="evidence" value="ECO:0007669"/>
    <property type="project" value="UniProtKB-KW"/>
</dbReference>
<dbReference type="GO" id="GO:0006417">
    <property type="term" value="P:regulation of translation"/>
    <property type="evidence" value="ECO:0007669"/>
    <property type="project" value="UniProtKB-KW"/>
</dbReference>
<dbReference type="GO" id="GO:0006412">
    <property type="term" value="P:translation"/>
    <property type="evidence" value="ECO:0007669"/>
    <property type="project" value="UniProtKB-UniRule"/>
</dbReference>
<dbReference type="CDD" id="cd00403">
    <property type="entry name" value="Ribosomal_L1"/>
    <property type="match status" value="1"/>
</dbReference>
<dbReference type="FunFam" id="3.40.50.790:FF:000001">
    <property type="entry name" value="50S ribosomal protein L1"/>
    <property type="match status" value="1"/>
</dbReference>
<dbReference type="Gene3D" id="3.30.190.20">
    <property type="match status" value="1"/>
</dbReference>
<dbReference type="Gene3D" id="3.40.50.790">
    <property type="match status" value="1"/>
</dbReference>
<dbReference type="HAMAP" id="MF_01318_B">
    <property type="entry name" value="Ribosomal_uL1_B"/>
    <property type="match status" value="1"/>
</dbReference>
<dbReference type="InterPro" id="IPR005878">
    <property type="entry name" value="Ribosom_uL1_bac-type"/>
</dbReference>
<dbReference type="InterPro" id="IPR002143">
    <property type="entry name" value="Ribosomal_uL1"/>
</dbReference>
<dbReference type="InterPro" id="IPR023674">
    <property type="entry name" value="Ribosomal_uL1-like"/>
</dbReference>
<dbReference type="InterPro" id="IPR028364">
    <property type="entry name" value="Ribosomal_uL1/biogenesis"/>
</dbReference>
<dbReference type="InterPro" id="IPR016095">
    <property type="entry name" value="Ribosomal_uL1_3-a/b-sand"/>
</dbReference>
<dbReference type="InterPro" id="IPR023673">
    <property type="entry name" value="Ribosomal_uL1_CS"/>
</dbReference>
<dbReference type="NCBIfam" id="TIGR01169">
    <property type="entry name" value="rplA_bact"/>
    <property type="match status" value="1"/>
</dbReference>
<dbReference type="PANTHER" id="PTHR36427">
    <property type="entry name" value="54S RIBOSOMAL PROTEIN L1, MITOCHONDRIAL"/>
    <property type="match status" value="1"/>
</dbReference>
<dbReference type="PANTHER" id="PTHR36427:SF3">
    <property type="entry name" value="LARGE RIBOSOMAL SUBUNIT PROTEIN UL1M"/>
    <property type="match status" value="1"/>
</dbReference>
<dbReference type="Pfam" id="PF00687">
    <property type="entry name" value="Ribosomal_L1"/>
    <property type="match status" value="1"/>
</dbReference>
<dbReference type="PIRSF" id="PIRSF002155">
    <property type="entry name" value="Ribosomal_L1"/>
    <property type="match status" value="1"/>
</dbReference>
<dbReference type="SUPFAM" id="SSF56808">
    <property type="entry name" value="Ribosomal protein L1"/>
    <property type="match status" value="1"/>
</dbReference>
<dbReference type="PROSITE" id="PS01199">
    <property type="entry name" value="RIBOSOMAL_L1"/>
    <property type="match status" value="1"/>
</dbReference>
<name>RL1_GLUDA</name>
<comment type="function">
    <text evidence="1">Binds directly to 23S rRNA. The L1 stalk is quite mobile in the ribosome, and is involved in E site tRNA release.</text>
</comment>
<comment type="function">
    <text evidence="1">Protein L1 is also a translational repressor protein, it controls the translation of the L11 operon by binding to its mRNA.</text>
</comment>
<comment type="subunit">
    <text evidence="1">Part of the 50S ribosomal subunit.</text>
</comment>
<comment type="similarity">
    <text evidence="1">Belongs to the universal ribosomal protein uL1 family.</text>
</comment>
<evidence type="ECO:0000255" key="1">
    <source>
        <dbReference type="HAMAP-Rule" id="MF_01318"/>
    </source>
</evidence>
<evidence type="ECO:0000305" key="2"/>
<proteinExistence type="inferred from homology"/>